<protein>
    <recommendedName>
        <fullName evidence="1">Photosystem I reaction center subunit IX</fullName>
    </recommendedName>
</protein>
<sequence>MKGLPKFLSLGPVLLVLWLSVQATLLIVINIIYPDLLFYPLS</sequence>
<name>PSAJ_GLOC7</name>
<proteinExistence type="inferred from homology"/>
<reference key="1">
    <citation type="journal article" date="2011" name="MBio">
        <title>Novel metabolic attributes of the genus Cyanothece, comprising a group of unicellular nitrogen-fixing Cyanobacteria.</title>
        <authorList>
            <person name="Bandyopadhyay A."/>
            <person name="Elvitigala T."/>
            <person name="Welsh E."/>
            <person name="Stockel J."/>
            <person name="Liberton M."/>
            <person name="Min H."/>
            <person name="Sherman L.A."/>
            <person name="Pakrasi H.B."/>
        </authorList>
    </citation>
    <scope>NUCLEOTIDE SEQUENCE [LARGE SCALE GENOMIC DNA]</scope>
    <source>
        <strain>PCC 7424</strain>
    </source>
</reference>
<evidence type="ECO:0000255" key="1">
    <source>
        <dbReference type="HAMAP-Rule" id="MF_00522"/>
    </source>
</evidence>
<comment type="function">
    <text evidence="1">May help in the organization of the PsaE and PsaF subunits.</text>
</comment>
<comment type="subcellular location">
    <subcellularLocation>
        <location evidence="1">Cellular thylakoid membrane</location>
        <topology evidence="1">Single-pass membrane protein</topology>
    </subcellularLocation>
</comment>
<comment type="similarity">
    <text evidence="1">Belongs to the PsaJ family.</text>
</comment>
<organism>
    <name type="scientific">Gloeothece citriformis (strain PCC 7424)</name>
    <name type="common">Cyanothece sp. (strain PCC 7424)</name>
    <dbReference type="NCBI Taxonomy" id="65393"/>
    <lineage>
        <taxon>Bacteria</taxon>
        <taxon>Bacillati</taxon>
        <taxon>Cyanobacteriota</taxon>
        <taxon>Cyanophyceae</taxon>
        <taxon>Oscillatoriophycideae</taxon>
        <taxon>Chroococcales</taxon>
        <taxon>Aphanothecaceae</taxon>
        <taxon>Gloeothece</taxon>
        <taxon>Gloeothece citriformis</taxon>
    </lineage>
</organism>
<gene>
    <name evidence="1" type="primary">psaJ</name>
    <name type="ordered locus">PCC7424_1184</name>
</gene>
<dbReference type="EMBL" id="CP001291">
    <property type="protein sequence ID" value="ACK69635.1"/>
    <property type="molecule type" value="Genomic_DNA"/>
</dbReference>
<dbReference type="RefSeq" id="WP_012598581.1">
    <property type="nucleotide sequence ID" value="NC_011729.1"/>
</dbReference>
<dbReference type="SMR" id="B7K767"/>
<dbReference type="STRING" id="65393.PCC7424_1184"/>
<dbReference type="KEGG" id="cyc:PCC7424_1184"/>
<dbReference type="HOGENOM" id="CLU_212133_0_0_3"/>
<dbReference type="Proteomes" id="UP000002384">
    <property type="component" value="Chromosome"/>
</dbReference>
<dbReference type="GO" id="GO:0009522">
    <property type="term" value="C:photosystem I"/>
    <property type="evidence" value="ECO:0007669"/>
    <property type="project" value="UniProtKB-KW"/>
</dbReference>
<dbReference type="GO" id="GO:0031676">
    <property type="term" value="C:plasma membrane-derived thylakoid membrane"/>
    <property type="evidence" value="ECO:0007669"/>
    <property type="project" value="UniProtKB-SubCell"/>
</dbReference>
<dbReference type="GO" id="GO:0015979">
    <property type="term" value="P:photosynthesis"/>
    <property type="evidence" value="ECO:0007669"/>
    <property type="project" value="UniProtKB-UniRule"/>
</dbReference>
<dbReference type="Gene3D" id="1.20.5.510">
    <property type="entry name" value="Single helix bin"/>
    <property type="match status" value="1"/>
</dbReference>
<dbReference type="HAMAP" id="MF_00522">
    <property type="entry name" value="PSI_PsaJ"/>
    <property type="match status" value="1"/>
</dbReference>
<dbReference type="InterPro" id="IPR002615">
    <property type="entry name" value="PSI_PsaJ"/>
</dbReference>
<dbReference type="InterPro" id="IPR036062">
    <property type="entry name" value="PSI_PsaJ_sf"/>
</dbReference>
<dbReference type="Pfam" id="PF01701">
    <property type="entry name" value="PSI_PsaJ"/>
    <property type="match status" value="1"/>
</dbReference>
<dbReference type="SUPFAM" id="SSF81544">
    <property type="entry name" value="Subunit IX of photosystem I reaction centre, PsaJ"/>
    <property type="match status" value="1"/>
</dbReference>
<accession>B7K767</accession>
<keyword id="KW-0472">Membrane</keyword>
<keyword id="KW-0602">Photosynthesis</keyword>
<keyword id="KW-0603">Photosystem I</keyword>
<keyword id="KW-1185">Reference proteome</keyword>
<keyword id="KW-0793">Thylakoid</keyword>
<keyword id="KW-0812">Transmembrane</keyword>
<keyword id="KW-1133">Transmembrane helix</keyword>
<feature type="chain" id="PRO_1000127649" description="Photosystem I reaction center subunit IX">
    <location>
        <begin position="1"/>
        <end position="42"/>
    </location>
</feature>
<feature type="transmembrane region" description="Helical" evidence="1">
    <location>
        <begin position="7"/>
        <end position="27"/>
    </location>
</feature>